<accession>Q5TM74</accession>
<feature type="transit peptide" description="Mitochondrion" evidence="3">
    <location>
        <begin position="1"/>
        <end position="26"/>
    </location>
</feature>
<feature type="chain" id="PRO_0000338001" description="Valine--tRNA ligase, mitochondrial">
    <location>
        <begin position="27"/>
        <end position="1064"/>
    </location>
</feature>
<feature type="region of interest" description="Disordered" evidence="4">
    <location>
        <begin position="25"/>
        <end position="65"/>
    </location>
</feature>
<feature type="short sequence motif" description="'HIGH' region">
    <location>
        <begin position="146"/>
        <end position="156"/>
    </location>
</feature>
<feature type="short sequence motif" description="'KMSKS' region">
    <location>
        <begin position="659"/>
        <end position="663"/>
    </location>
</feature>
<feature type="compositionally biased region" description="Basic and acidic residues" evidence="4">
    <location>
        <begin position="42"/>
        <end position="56"/>
    </location>
</feature>
<feature type="binding site" evidence="1">
    <location>
        <position position="662"/>
    </location>
    <ligand>
        <name>ATP</name>
        <dbReference type="ChEBI" id="CHEBI:30616"/>
    </ligand>
</feature>
<sequence length="1064" mass="118642">MPHLPLASFRPPFWGLRHSRGLPRFHSVSTQSEPHGSPISRRNREAKQKRLREKQATLETDIAGESKSPAESIKAWSPKEVVLYEIPTKPGEKKDVSGPLPPAYSPRYVEAAWYPWWVREGFFKPEYQARLPQATGETFSMCIPPPNVTGSLHIGHALTVAIQDALVRWHRMRGDQVLWVPGSDHAGIATQAVVEKQLWKEQGVRRHELSREAFLREVWQWKEAKGGEICEQLRALGASLDWDRECFTMDVGSSVAVTEAFVRLYKAGLLYRNRRLGRWMSCPLTQLSRRFQVENRPLPGRTQLRLPGCPTPVSFGLLFSVAFPVDGEPDAEVVVGTTRPETLPGDVAVAVHPDDSRYTHLHGRQLRHPLMGQPLPLITDYAVQPHVGTGAVKVTPAHSPADAEMGARHGLSPLNVIAEDGTMTSLCGDWLQGLHRFVAREKIVSVLSERGLFRGLQNHPMVLPICSRSGDVIEYLLKSQWFVRCQEMGARAAQAVESGALELSPSFHQKNWQHWFSHIGDWCVSRQLWWGHQIPAYLVVEDHAQGEEDCWVVGRSEAEAREVAAELTGRPGAELALERDPDVLDTWFSSALFPFSALGWPQETPDLARFYPLSLLETGSDLLLFWVGRMVMLGTQLTGRLPFSKVLLHPMVRDRQGRKMSKSLGNVLDPRHIISGAEMQVLQEKLRSGNLDPAELAIVAAAQKKDFPHGIPECGTDALRFTLCSHGVQGGDLCLSVSEVQSCRHFCNKIWNALRFILNALGEKFVPQPAKELSPSCHMDAWILSRLALTARECERGFLTRELSLVTHALHHFWLHNLCDVYLEAVKPVLRHSPCPPGPPQVLFSCADIGLRLLAPLMPFLAEELWQRLPPRPGCPPAPSISVAPYPSPCSLEHWRQPELERRFSRVQEVVQVLRALRATYQLTKARPRVLLQSSEPGDQGLFEAFLEPLGTLSHCGAVGLLPPGAAAPSGWAQAPLSDTVQVYMELQGLVDPQIQLPLLAARRSKLQKQLDGLMARTPSEGEAGTQRQQRLSSLQLELSKLDKAASHLRQLMDEPPAPGSPEL</sequence>
<proteinExistence type="inferred from homology"/>
<organism>
    <name type="scientific">Macaca mulatta</name>
    <name type="common">Rhesus macaque</name>
    <dbReference type="NCBI Taxonomy" id="9544"/>
    <lineage>
        <taxon>Eukaryota</taxon>
        <taxon>Metazoa</taxon>
        <taxon>Chordata</taxon>
        <taxon>Craniata</taxon>
        <taxon>Vertebrata</taxon>
        <taxon>Euteleostomi</taxon>
        <taxon>Mammalia</taxon>
        <taxon>Eutheria</taxon>
        <taxon>Euarchontoglires</taxon>
        <taxon>Primates</taxon>
        <taxon>Haplorrhini</taxon>
        <taxon>Catarrhini</taxon>
        <taxon>Cercopithecidae</taxon>
        <taxon>Cercopithecinae</taxon>
        <taxon>Macaca</taxon>
    </lineage>
</organism>
<dbReference type="EC" id="6.1.1.9" evidence="2"/>
<dbReference type="EMBL" id="AB128049">
    <property type="protein sequence ID" value="BAD69752.1"/>
    <property type="status" value="ALT_SEQ"/>
    <property type="molecule type" value="Genomic_DNA"/>
</dbReference>
<dbReference type="SMR" id="Q5TM74"/>
<dbReference type="FunCoup" id="Q5TM74">
    <property type="interactions" value="395"/>
</dbReference>
<dbReference type="STRING" id="9544.ENSMMUP00000034137"/>
<dbReference type="PaxDb" id="9544-ENSMMUP00000024488"/>
<dbReference type="eggNOG" id="KOG0432">
    <property type="taxonomic scope" value="Eukaryota"/>
</dbReference>
<dbReference type="HOGENOM" id="CLU_001493_0_2_1"/>
<dbReference type="InParanoid" id="Q5TM74"/>
<dbReference type="TreeFam" id="TF354250"/>
<dbReference type="Proteomes" id="UP000006718">
    <property type="component" value="Unassembled WGS sequence"/>
</dbReference>
<dbReference type="GO" id="GO:0005829">
    <property type="term" value="C:cytosol"/>
    <property type="evidence" value="ECO:0000318"/>
    <property type="project" value="GO_Central"/>
</dbReference>
<dbReference type="GO" id="GO:0005739">
    <property type="term" value="C:mitochondrion"/>
    <property type="evidence" value="ECO:0007669"/>
    <property type="project" value="UniProtKB-SubCell"/>
</dbReference>
<dbReference type="GO" id="GO:0002161">
    <property type="term" value="F:aminoacyl-tRNA deacylase activity"/>
    <property type="evidence" value="ECO:0007669"/>
    <property type="project" value="InterPro"/>
</dbReference>
<dbReference type="GO" id="GO:0005524">
    <property type="term" value="F:ATP binding"/>
    <property type="evidence" value="ECO:0007669"/>
    <property type="project" value="UniProtKB-KW"/>
</dbReference>
<dbReference type="GO" id="GO:0004832">
    <property type="term" value="F:valine-tRNA ligase activity"/>
    <property type="evidence" value="ECO:0000250"/>
    <property type="project" value="UniProtKB"/>
</dbReference>
<dbReference type="GO" id="GO:0006438">
    <property type="term" value="P:valyl-tRNA aminoacylation"/>
    <property type="evidence" value="ECO:0000318"/>
    <property type="project" value="GO_Central"/>
</dbReference>
<dbReference type="CDD" id="cd07962">
    <property type="entry name" value="Anticodon_Ia_Val"/>
    <property type="match status" value="1"/>
</dbReference>
<dbReference type="CDD" id="cd00817">
    <property type="entry name" value="ValRS_core"/>
    <property type="match status" value="1"/>
</dbReference>
<dbReference type="FunFam" id="1.10.730.10:FF:000019">
    <property type="entry name" value="Valine--tRNA ligase, mitochondrial"/>
    <property type="match status" value="1"/>
</dbReference>
<dbReference type="FunFam" id="3.40.50.620:FF:000020">
    <property type="entry name" value="Valine--tRNA ligase, mitochondrial"/>
    <property type="match status" value="1"/>
</dbReference>
<dbReference type="FunFam" id="3.40.50.620:FF:000120">
    <property type="entry name" value="Valine--tRNA ligase, mitochondrial"/>
    <property type="match status" value="1"/>
</dbReference>
<dbReference type="FunFam" id="3.90.740.10:FF:000007">
    <property type="entry name" value="Valine--tRNA ligase, mitochondrial"/>
    <property type="match status" value="1"/>
</dbReference>
<dbReference type="FunFam" id="3.90.740.10:FF:000014">
    <property type="entry name" value="valine--tRNA ligase, mitochondrial"/>
    <property type="match status" value="1"/>
</dbReference>
<dbReference type="Gene3D" id="3.40.50.620">
    <property type="entry name" value="HUPs"/>
    <property type="match status" value="2"/>
</dbReference>
<dbReference type="Gene3D" id="1.10.730.10">
    <property type="entry name" value="Isoleucyl-tRNA Synthetase, Domain 1"/>
    <property type="match status" value="1"/>
</dbReference>
<dbReference type="Gene3D" id="3.90.740.10">
    <property type="entry name" value="Valyl/Leucyl/Isoleucyl-tRNA synthetase, editing domain"/>
    <property type="match status" value="2"/>
</dbReference>
<dbReference type="InterPro" id="IPR001412">
    <property type="entry name" value="aa-tRNA-synth_I_CS"/>
</dbReference>
<dbReference type="InterPro" id="IPR002300">
    <property type="entry name" value="aa-tRNA-synth_Ia"/>
</dbReference>
<dbReference type="InterPro" id="IPR033705">
    <property type="entry name" value="Anticodon_Ia_Val"/>
</dbReference>
<dbReference type="InterPro" id="IPR013155">
    <property type="entry name" value="M/V/L/I-tRNA-synth_anticd-bd"/>
</dbReference>
<dbReference type="InterPro" id="IPR014729">
    <property type="entry name" value="Rossmann-like_a/b/a_fold"/>
</dbReference>
<dbReference type="InterPro" id="IPR009080">
    <property type="entry name" value="tRNAsynth_Ia_anticodon-bd"/>
</dbReference>
<dbReference type="InterPro" id="IPR009008">
    <property type="entry name" value="Val/Leu/Ile-tRNA-synth_edit"/>
</dbReference>
<dbReference type="InterPro" id="IPR002303">
    <property type="entry name" value="Valyl-tRNA_ligase"/>
</dbReference>
<dbReference type="NCBIfam" id="NF004349">
    <property type="entry name" value="PRK05729.1"/>
    <property type="match status" value="1"/>
</dbReference>
<dbReference type="NCBIfam" id="TIGR00422">
    <property type="entry name" value="valS"/>
    <property type="match status" value="1"/>
</dbReference>
<dbReference type="PANTHER" id="PTHR11946:SF71">
    <property type="entry name" value="VALINE--TRNA LIGASE, MITOCHONDRIAL"/>
    <property type="match status" value="1"/>
</dbReference>
<dbReference type="PANTHER" id="PTHR11946">
    <property type="entry name" value="VALYL-TRNA SYNTHETASES"/>
    <property type="match status" value="1"/>
</dbReference>
<dbReference type="Pfam" id="PF08264">
    <property type="entry name" value="Anticodon_1"/>
    <property type="match status" value="1"/>
</dbReference>
<dbReference type="Pfam" id="PF00133">
    <property type="entry name" value="tRNA-synt_1"/>
    <property type="match status" value="1"/>
</dbReference>
<dbReference type="PRINTS" id="PR00986">
    <property type="entry name" value="TRNASYNTHVAL"/>
</dbReference>
<dbReference type="SUPFAM" id="SSF47323">
    <property type="entry name" value="Anticodon-binding domain of a subclass of class I aminoacyl-tRNA synthetases"/>
    <property type="match status" value="1"/>
</dbReference>
<dbReference type="SUPFAM" id="SSF52374">
    <property type="entry name" value="Nucleotidylyl transferase"/>
    <property type="match status" value="1"/>
</dbReference>
<dbReference type="SUPFAM" id="SSF50677">
    <property type="entry name" value="ValRS/IleRS/LeuRS editing domain"/>
    <property type="match status" value="1"/>
</dbReference>
<dbReference type="PROSITE" id="PS00178">
    <property type="entry name" value="AA_TRNA_LIGASE_I"/>
    <property type="match status" value="1"/>
</dbReference>
<protein>
    <recommendedName>
        <fullName>Valine--tRNA ligase, mitochondrial</fullName>
        <ecNumber evidence="2">6.1.1.9</ecNumber>
    </recommendedName>
    <alternativeName>
        <fullName>Valyl-tRNA synthetase</fullName>
        <shortName>ValRS</shortName>
    </alternativeName>
</protein>
<reference key="1">
    <citation type="journal article" date="2004" name="Mol. Biol. Evol.">
        <title>Rhesus macaque class I duplicon structures, organization, and evolution within the alpha block of the major histocompatibility complex.</title>
        <authorList>
            <person name="Kulski J.K."/>
            <person name="Anzai T."/>
            <person name="Shiina T."/>
            <person name="Inoko H."/>
        </authorList>
    </citation>
    <scope>NUCLEOTIDE SEQUENCE [LARGE SCALE GENOMIC DNA]</scope>
</reference>
<keyword id="KW-0030">Aminoacyl-tRNA synthetase</keyword>
<keyword id="KW-0067">ATP-binding</keyword>
<keyword id="KW-0436">Ligase</keyword>
<keyword id="KW-0496">Mitochondrion</keyword>
<keyword id="KW-0547">Nucleotide-binding</keyword>
<keyword id="KW-0648">Protein biosynthesis</keyword>
<keyword id="KW-1185">Reference proteome</keyword>
<keyword id="KW-0809">Transit peptide</keyword>
<comment type="function">
    <text evidence="2">Catalyzes the attachment of valine to tRNA(Val) in a two-step reaction: valine is first activated by ATP to form Val-AMP and then transferred to the acceptor end of tRNA(Val).</text>
</comment>
<comment type="catalytic activity">
    <reaction evidence="2">
        <text>tRNA(Val) + L-valine + ATP = L-valyl-tRNA(Val) + AMP + diphosphate</text>
        <dbReference type="Rhea" id="RHEA:10704"/>
        <dbReference type="Rhea" id="RHEA-COMP:9672"/>
        <dbReference type="Rhea" id="RHEA-COMP:9708"/>
        <dbReference type="ChEBI" id="CHEBI:30616"/>
        <dbReference type="ChEBI" id="CHEBI:33019"/>
        <dbReference type="ChEBI" id="CHEBI:57762"/>
        <dbReference type="ChEBI" id="CHEBI:78442"/>
        <dbReference type="ChEBI" id="CHEBI:78537"/>
        <dbReference type="ChEBI" id="CHEBI:456215"/>
        <dbReference type="EC" id="6.1.1.9"/>
    </reaction>
</comment>
<comment type="subcellular location">
    <subcellularLocation>
        <location evidence="5">Mitochondrion</location>
    </subcellularLocation>
</comment>
<comment type="similarity">
    <text evidence="5">Belongs to the class-I aminoacyl-tRNA synthetase family.</text>
</comment>
<comment type="sequence caution" evidence="5">
    <conflict type="erroneous gene model prediction">
        <sequence resource="EMBL-CDS" id="BAD69752"/>
    </conflict>
</comment>
<evidence type="ECO:0000250" key="1"/>
<evidence type="ECO:0000250" key="2">
    <source>
        <dbReference type="UniProtKB" id="Q5ST30"/>
    </source>
</evidence>
<evidence type="ECO:0000255" key="3"/>
<evidence type="ECO:0000256" key="4">
    <source>
        <dbReference type="SAM" id="MobiDB-lite"/>
    </source>
</evidence>
<evidence type="ECO:0000305" key="5"/>
<name>SYVM_MACMU</name>
<gene>
    <name type="primary">VARS2</name>
</gene>